<proteinExistence type="inferred from homology"/>
<keyword id="KW-0963">Cytoplasm</keyword>
<keyword id="KW-0238">DNA-binding</keyword>
<keyword id="KW-1185">Reference proteome</keyword>
<keyword id="KW-0804">Transcription</keyword>
<keyword id="KW-0805">Transcription regulation</keyword>
<protein>
    <recommendedName>
        <fullName evidence="1">Probable transcriptional regulatory protein TDE_1487</fullName>
    </recommendedName>
</protein>
<name>Y1487_TREDE</name>
<organism>
    <name type="scientific">Treponema denticola (strain ATCC 35405 / DSM 14222 / CIP 103919 / JCM 8153 / KCTC 15104)</name>
    <dbReference type="NCBI Taxonomy" id="243275"/>
    <lineage>
        <taxon>Bacteria</taxon>
        <taxon>Pseudomonadati</taxon>
        <taxon>Spirochaetota</taxon>
        <taxon>Spirochaetia</taxon>
        <taxon>Spirochaetales</taxon>
        <taxon>Treponemataceae</taxon>
        <taxon>Treponema</taxon>
    </lineage>
</organism>
<comment type="subcellular location">
    <subcellularLocation>
        <location evidence="1">Cytoplasm</location>
    </subcellularLocation>
</comment>
<comment type="similarity">
    <text evidence="1">Belongs to the TACO1 family.</text>
</comment>
<dbReference type="EMBL" id="AE017226">
    <property type="protein sequence ID" value="AAS12004.1"/>
    <property type="molecule type" value="Genomic_DNA"/>
</dbReference>
<dbReference type="RefSeq" id="NP_972093.1">
    <property type="nucleotide sequence ID" value="NC_002967.9"/>
</dbReference>
<dbReference type="RefSeq" id="WP_002668967.1">
    <property type="nucleotide sequence ID" value="NC_002967.9"/>
</dbReference>
<dbReference type="SMR" id="P62042"/>
<dbReference type="STRING" id="243275.TDE_1487"/>
<dbReference type="PaxDb" id="243275-TDE_1487"/>
<dbReference type="GeneID" id="2739888"/>
<dbReference type="KEGG" id="tde:TDE_1487"/>
<dbReference type="PATRIC" id="fig|243275.7.peg.1426"/>
<dbReference type="eggNOG" id="COG0217">
    <property type="taxonomic scope" value="Bacteria"/>
</dbReference>
<dbReference type="HOGENOM" id="CLU_062974_2_2_12"/>
<dbReference type="OrthoDB" id="9781053at2"/>
<dbReference type="Proteomes" id="UP000008212">
    <property type="component" value="Chromosome"/>
</dbReference>
<dbReference type="GO" id="GO:0005829">
    <property type="term" value="C:cytosol"/>
    <property type="evidence" value="ECO:0007669"/>
    <property type="project" value="TreeGrafter"/>
</dbReference>
<dbReference type="GO" id="GO:0003677">
    <property type="term" value="F:DNA binding"/>
    <property type="evidence" value="ECO:0007669"/>
    <property type="project" value="UniProtKB-UniRule"/>
</dbReference>
<dbReference type="GO" id="GO:0006355">
    <property type="term" value="P:regulation of DNA-templated transcription"/>
    <property type="evidence" value="ECO:0007669"/>
    <property type="project" value="UniProtKB-UniRule"/>
</dbReference>
<dbReference type="FunFam" id="1.10.10.200:FF:000002">
    <property type="entry name" value="Probable transcriptional regulatory protein CLM62_37755"/>
    <property type="match status" value="1"/>
</dbReference>
<dbReference type="FunFam" id="3.30.70.980:FF:000002">
    <property type="entry name" value="Probable transcriptional regulatory protein YebC"/>
    <property type="match status" value="1"/>
</dbReference>
<dbReference type="Gene3D" id="1.10.10.200">
    <property type="match status" value="1"/>
</dbReference>
<dbReference type="Gene3D" id="3.30.70.980">
    <property type="match status" value="2"/>
</dbReference>
<dbReference type="HAMAP" id="MF_00693">
    <property type="entry name" value="Transcrip_reg_TACO1"/>
    <property type="match status" value="1"/>
</dbReference>
<dbReference type="InterPro" id="IPR017856">
    <property type="entry name" value="Integrase-like_N"/>
</dbReference>
<dbReference type="InterPro" id="IPR048300">
    <property type="entry name" value="TACO1_YebC-like_2nd/3rd_dom"/>
</dbReference>
<dbReference type="InterPro" id="IPR049083">
    <property type="entry name" value="TACO1_YebC_N"/>
</dbReference>
<dbReference type="InterPro" id="IPR002876">
    <property type="entry name" value="Transcrip_reg_TACO1-like"/>
</dbReference>
<dbReference type="InterPro" id="IPR026564">
    <property type="entry name" value="Transcrip_reg_TACO1-like_dom3"/>
</dbReference>
<dbReference type="InterPro" id="IPR029072">
    <property type="entry name" value="YebC-like"/>
</dbReference>
<dbReference type="NCBIfam" id="NF001030">
    <property type="entry name" value="PRK00110.1"/>
    <property type="match status" value="1"/>
</dbReference>
<dbReference type="NCBIfam" id="NF009044">
    <property type="entry name" value="PRK12378.1"/>
    <property type="match status" value="1"/>
</dbReference>
<dbReference type="NCBIfam" id="TIGR01033">
    <property type="entry name" value="YebC/PmpR family DNA-binding transcriptional regulator"/>
    <property type="match status" value="1"/>
</dbReference>
<dbReference type="PANTHER" id="PTHR12532:SF6">
    <property type="entry name" value="TRANSCRIPTIONAL REGULATORY PROTEIN YEBC-RELATED"/>
    <property type="match status" value="1"/>
</dbReference>
<dbReference type="PANTHER" id="PTHR12532">
    <property type="entry name" value="TRANSLATIONAL ACTIVATOR OF CYTOCHROME C OXIDASE 1"/>
    <property type="match status" value="1"/>
</dbReference>
<dbReference type="Pfam" id="PF20772">
    <property type="entry name" value="TACO1_YebC_N"/>
    <property type="match status" value="1"/>
</dbReference>
<dbReference type="Pfam" id="PF01709">
    <property type="entry name" value="Transcrip_reg"/>
    <property type="match status" value="1"/>
</dbReference>
<dbReference type="SUPFAM" id="SSF75625">
    <property type="entry name" value="YebC-like"/>
    <property type="match status" value="1"/>
</dbReference>
<sequence>MSGHSKWATIKHAKGAADAKRGQLFTKFIKEISIAAKMGGGDPATNPRLRTAVLKARAANMPKDNIERAIKKGTGELGAVNYEELLYEGYGPGGVAVLVEVLTDNKNRTAASVRNIFTKSGGNLGATGSVAYMFNRKGVIEYDAEVVSEEAIMEAALEAGAEDIATEDGVITVTTDPNDFASVLEALQEKGFESVSAAVSMVPDTYVALDADTTQKALKMIDKLEEDDDVQTVSSNIEIPEGFEMPE</sequence>
<reference key="1">
    <citation type="journal article" date="2004" name="Proc. Natl. Acad. Sci. U.S.A.">
        <title>Comparison of the genome of the oral pathogen Treponema denticola with other spirochete genomes.</title>
        <authorList>
            <person name="Seshadri R."/>
            <person name="Myers G.S.A."/>
            <person name="Tettelin H."/>
            <person name="Eisen J.A."/>
            <person name="Heidelberg J.F."/>
            <person name="Dodson R.J."/>
            <person name="Davidsen T.M."/>
            <person name="DeBoy R.T."/>
            <person name="Fouts D.E."/>
            <person name="Haft D.H."/>
            <person name="Selengut J."/>
            <person name="Ren Q."/>
            <person name="Brinkac L.M."/>
            <person name="Madupu R."/>
            <person name="Kolonay J.F."/>
            <person name="Durkin S.A."/>
            <person name="Daugherty S.C."/>
            <person name="Shetty J."/>
            <person name="Shvartsbeyn A."/>
            <person name="Gebregeorgis E."/>
            <person name="Geer K."/>
            <person name="Tsegaye G."/>
            <person name="Malek J.A."/>
            <person name="Ayodeji B."/>
            <person name="Shatsman S."/>
            <person name="McLeod M.P."/>
            <person name="Smajs D."/>
            <person name="Howell J.K."/>
            <person name="Pal S."/>
            <person name="Amin A."/>
            <person name="Vashisth P."/>
            <person name="McNeill T.Z."/>
            <person name="Xiang Q."/>
            <person name="Sodergren E."/>
            <person name="Baca E."/>
            <person name="Weinstock G.M."/>
            <person name="Norris S.J."/>
            <person name="Fraser C.M."/>
            <person name="Paulsen I.T."/>
        </authorList>
    </citation>
    <scope>NUCLEOTIDE SEQUENCE [LARGE SCALE GENOMIC DNA]</scope>
    <source>
        <strain>ATCC 35405 / DSM 14222 / CIP 103919 / JCM 8153 / KCTC 15104</strain>
    </source>
</reference>
<evidence type="ECO:0000255" key="1">
    <source>
        <dbReference type="HAMAP-Rule" id="MF_00693"/>
    </source>
</evidence>
<accession>P62042</accession>
<gene>
    <name type="ordered locus">TDE_1487</name>
</gene>
<feature type="chain" id="PRO_0000175921" description="Probable transcriptional regulatory protein TDE_1487">
    <location>
        <begin position="1"/>
        <end position="247"/>
    </location>
</feature>